<dbReference type="EMBL" id="FM209186">
    <property type="protein sequence ID" value="CAW28381.1"/>
    <property type="molecule type" value="Genomic_DNA"/>
</dbReference>
<dbReference type="RefSeq" id="WP_003087637.1">
    <property type="nucleotide sequence ID" value="NC_011770.1"/>
</dbReference>
<dbReference type="SMR" id="B7UV48"/>
<dbReference type="KEGG" id="pag:PLES_36541"/>
<dbReference type="HOGENOM" id="CLU_086902_2_1_6"/>
<dbReference type="GO" id="GO:0005506">
    <property type="term" value="F:iron ion binding"/>
    <property type="evidence" value="ECO:0007669"/>
    <property type="project" value="UniProtKB-UniRule"/>
</dbReference>
<dbReference type="GO" id="GO:0005344">
    <property type="term" value="F:oxygen carrier activity"/>
    <property type="evidence" value="ECO:0007669"/>
    <property type="project" value="UniProtKB-UniRule"/>
</dbReference>
<dbReference type="CDD" id="cd12107">
    <property type="entry name" value="Hemerythrin"/>
    <property type="match status" value="1"/>
</dbReference>
<dbReference type="Gene3D" id="1.20.120.50">
    <property type="entry name" value="Hemerythrin-like"/>
    <property type="match status" value="1"/>
</dbReference>
<dbReference type="HAMAP" id="MF_00556">
    <property type="entry name" value="Hemerythrin"/>
    <property type="match status" value="1"/>
</dbReference>
<dbReference type="InterPro" id="IPR023504">
    <property type="entry name" value="Bacteriohemerythrin-like"/>
</dbReference>
<dbReference type="InterPro" id="IPR016131">
    <property type="entry name" value="Haemerythrin_Fe_BS"/>
</dbReference>
<dbReference type="InterPro" id="IPR050669">
    <property type="entry name" value="Hemerythrin"/>
</dbReference>
<dbReference type="InterPro" id="IPR012312">
    <property type="entry name" value="Hemerythrin-like"/>
</dbReference>
<dbReference type="InterPro" id="IPR035938">
    <property type="entry name" value="Hemerythrin-like_sf"/>
</dbReference>
<dbReference type="InterPro" id="IPR012827">
    <property type="entry name" value="Hemerythrin_metal-bd"/>
</dbReference>
<dbReference type="NCBIfam" id="NF033749">
    <property type="entry name" value="bact_hemeryth"/>
    <property type="match status" value="1"/>
</dbReference>
<dbReference type="NCBIfam" id="TIGR02481">
    <property type="entry name" value="hemeryth_dom"/>
    <property type="match status" value="1"/>
</dbReference>
<dbReference type="NCBIfam" id="NF002007">
    <property type="entry name" value="PRK00808.1"/>
    <property type="match status" value="1"/>
</dbReference>
<dbReference type="PANTHER" id="PTHR37164">
    <property type="entry name" value="BACTERIOHEMERYTHRIN"/>
    <property type="match status" value="1"/>
</dbReference>
<dbReference type="PANTHER" id="PTHR37164:SF1">
    <property type="entry name" value="BACTERIOHEMERYTHRIN"/>
    <property type="match status" value="1"/>
</dbReference>
<dbReference type="Pfam" id="PF01814">
    <property type="entry name" value="Hemerythrin"/>
    <property type="match status" value="1"/>
</dbReference>
<dbReference type="SUPFAM" id="SSF47188">
    <property type="entry name" value="Hemerythrin-like"/>
    <property type="match status" value="1"/>
</dbReference>
<dbReference type="PROSITE" id="PS00550">
    <property type="entry name" value="HEMERYTHRINS"/>
    <property type="match status" value="1"/>
</dbReference>
<comment type="function">
    <text evidence="1">Oxygen-binding protein. May be involved in a storage mechanism or for delivery to oxygen-requiring enzymes. The oxygen-binding site contains two iron atoms.</text>
</comment>
<comment type="subunit">
    <text evidence="1">Monomer.</text>
</comment>
<comment type="similarity">
    <text evidence="1">Belongs to the hemerythrin family.</text>
</comment>
<protein>
    <recommendedName>
        <fullName evidence="1">Bacteriohemerythrin</fullName>
    </recommendedName>
</protein>
<gene>
    <name type="ordered locus">PLES_36541</name>
</gene>
<feature type="chain" id="PRO_1000129141" description="Bacteriohemerythrin">
    <location>
        <begin position="1"/>
        <end position="153"/>
    </location>
</feature>
<feature type="binding site" evidence="1">
    <location>
        <position position="21"/>
    </location>
    <ligand>
        <name>Fe cation</name>
        <dbReference type="ChEBI" id="CHEBI:24875"/>
        <label>1</label>
    </ligand>
</feature>
<feature type="binding site" evidence="1">
    <location>
        <position position="57"/>
    </location>
    <ligand>
        <name>Fe cation</name>
        <dbReference type="ChEBI" id="CHEBI:24875"/>
        <label>1</label>
    </ligand>
</feature>
<feature type="binding site" evidence="1">
    <location>
        <position position="61"/>
    </location>
    <ligand>
        <name>Fe cation</name>
        <dbReference type="ChEBI" id="CHEBI:24875"/>
        <label>1</label>
    </ligand>
</feature>
<feature type="binding site" evidence="1">
    <location>
        <position position="61"/>
    </location>
    <ligand>
        <name>Fe cation</name>
        <dbReference type="ChEBI" id="CHEBI:24875"/>
        <label>2</label>
    </ligand>
</feature>
<feature type="binding site" evidence="1">
    <location>
        <position position="76"/>
    </location>
    <ligand>
        <name>Fe cation</name>
        <dbReference type="ChEBI" id="CHEBI:24875"/>
        <label>2</label>
    </ligand>
</feature>
<feature type="binding site" evidence="1">
    <location>
        <position position="80"/>
    </location>
    <ligand>
        <name>Fe cation</name>
        <dbReference type="ChEBI" id="CHEBI:24875"/>
        <label>2</label>
    </ligand>
</feature>
<feature type="binding site" evidence="1">
    <location>
        <position position="115"/>
    </location>
    <ligand>
        <name>Fe cation</name>
        <dbReference type="ChEBI" id="CHEBI:24875"/>
        <label>2</label>
    </ligand>
</feature>
<feature type="binding site" evidence="1">
    <location>
        <position position="120"/>
    </location>
    <ligand>
        <name>Fe cation</name>
        <dbReference type="ChEBI" id="CHEBI:24875"/>
        <label>1</label>
    </ligand>
</feature>
<feature type="binding site" evidence="1">
    <location>
        <position position="120"/>
    </location>
    <ligand>
        <name>Fe cation</name>
        <dbReference type="ChEBI" id="CHEBI:24875"/>
        <label>2</label>
    </ligand>
</feature>
<sequence length="153" mass="17853">MAHLVWQDDLNTGIQVIDNQHKRIVEMINHLHDAQQGKEHAAIAEVIEELVDYTLSHFAFEETLMEDAGYQFSRAHKKIHELFIRRVSEYRVRFQAGEDVGDELKGLLSRWLFNHIRNDDAGYVDAVRHSMSELVKDKSEGGWLSRSMKRFFG</sequence>
<name>HEMTB_PSEA8</name>
<evidence type="ECO:0000255" key="1">
    <source>
        <dbReference type="HAMAP-Rule" id="MF_00556"/>
    </source>
</evidence>
<reference key="1">
    <citation type="journal article" date="2009" name="Genome Res.">
        <title>Newly introduced genomic prophage islands are critical determinants of in vivo competitiveness in the Liverpool epidemic strain of Pseudomonas aeruginosa.</title>
        <authorList>
            <person name="Winstanley C."/>
            <person name="Langille M.G.I."/>
            <person name="Fothergill J.L."/>
            <person name="Kukavica-Ibrulj I."/>
            <person name="Paradis-Bleau C."/>
            <person name="Sanschagrin F."/>
            <person name="Thomson N.R."/>
            <person name="Winsor G.L."/>
            <person name="Quail M.A."/>
            <person name="Lennard N."/>
            <person name="Bignell A."/>
            <person name="Clarke L."/>
            <person name="Seeger K."/>
            <person name="Saunders D."/>
            <person name="Harris D."/>
            <person name="Parkhill J."/>
            <person name="Hancock R.E.W."/>
            <person name="Brinkman F.S.L."/>
            <person name="Levesque R.C."/>
        </authorList>
    </citation>
    <scope>NUCLEOTIDE SEQUENCE [LARGE SCALE GENOMIC DNA]</scope>
    <source>
        <strain>LESB58</strain>
    </source>
</reference>
<organism>
    <name type="scientific">Pseudomonas aeruginosa (strain LESB58)</name>
    <dbReference type="NCBI Taxonomy" id="557722"/>
    <lineage>
        <taxon>Bacteria</taxon>
        <taxon>Pseudomonadati</taxon>
        <taxon>Pseudomonadota</taxon>
        <taxon>Gammaproteobacteria</taxon>
        <taxon>Pseudomonadales</taxon>
        <taxon>Pseudomonadaceae</taxon>
        <taxon>Pseudomonas</taxon>
    </lineage>
</organism>
<keyword id="KW-0408">Iron</keyword>
<keyword id="KW-0479">Metal-binding</keyword>
<keyword id="KW-0561">Oxygen transport</keyword>
<keyword id="KW-0813">Transport</keyword>
<proteinExistence type="inferred from homology"/>
<accession>B7UV48</accession>